<protein>
    <recommendedName>
        <fullName evidence="4">Pre-mRNA-processing factor 19</fullName>
        <ecNumber evidence="2">2.3.2.27</ecNumber>
    </recommendedName>
    <alternativeName>
        <fullName>Neuronal differentiation-related gene protein</fullName>
    </alternativeName>
    <alternativeName>
        <fullName>PRP19/PSO4 homolog</fullName>
    </alternativeName>
    <alternativeName>
        <fullName evidence="4">RING-type E3 ubiquitin transferase PRP19</fullName>
    </alternativeName>
</protein>
<keyword id="KW-0007">Acetylation</keyword>
<keyword id="KW-0963">Cytoplasm</keyword>
<keyword id="KW-0206">Cytoskeleton</keyword>
<keyword id="KW-0227">DNA damage</keyword>
<keyword id="KW-0234">DNA repair</keyword>
<keyword id="KW-0551">Lipid droplet</keyword>
<keyword id="KW-0507">mRNA processing</keyword>
<keyword id="KW-0508">mRNA splicing</keyword>
<keyword id="KW-0539">Nucleus</keyword>
<keyword id="KW-1185">Reference proteome</keyword>
<keyword id="KW-0677">Repeat</keyword>
<keyword id="KW-0747">Spliceosome</keyword>
<keyword id="KW-0808">Transferase</keyword>
<keyword id="KW-0833">Ubl conjugation pathway</keyword>
<keyword id="KW-0853">WD repeat</keyword>
<gene>
    <name evidence="5" type="primary">Prpf19</name>
    <name type="synonym">Prp19</name>
</gene>
<comment type="function">
    <text evidence="1 2 3">Ubiquitin-protein ligase which is a core component of several complexes mainly involved pre-mRNA splicing and DNA repair. Required for pre-mRNA splicing as component of the spliceosome. Core component of the PRP19C/Prp19 complex/NTC/Nineteen complex which is part of the spliceosome and participates in its assembly, its remodeling and is required for its activity. During assembly of the spliceosome, mediates 'Lys-63'-linked polyubiquitination of the U4 spliceosomal protein PRPF3. Ubiquitination of PRPF3 allows its recognition by the U5 component PRPF8 and stabilizes the U4/U5/U6 tri-snRNP spliceosomal complex. Recruited to RNA polymerase II C-terminal domain (CTD) and the pre-mRNA, it may also couple the transcriptional and spliceosomal machineries. The XAB2 complex, which contains PRPF19, is also involved in pre-mRNA splicing, transcription and transcription-coupled repair. Beside its role in pre-mRNA splicing PRPF19, as part of the PRP19-CDC5L complex, plays a role in the DNA damage response/DDR. It is recruited to the sites of DNA damage by the RPA complex where PRPF19 directly ubiquitinates RPA1 and RPA2. 'Lys-63'-linked polyubiquitination of the RPA complex allows the recruitment of the ATR-ATRIP complex and the activation of ATR, a master regulator of the DNA damage response. May also play a role in DNA double-strand break (DSB) repair by recruiting the repair factor SETMAR to altered DNA. As part of the PSO4 complex may also be involved in the DNA interstrand cross-links/ICLs repair process. In addition, may also mediate 'Lys-48'-linked polyubiquitination of substrates and play a role in proteasomal degradation (By similarity). May play a role in the biogenesis of lipid droplets (By similarity). May play a role in neural differentiation possibly through its function as part of the spliceosome (PubMed:16352598).</text>
</comment>
<comment type="catalytic activity">
    <reaction evidence="2">
        <text>S-ubiquitinyl-[E2 ubiquitin-conjugating enzyme]-L-cysteine + [acceptor protein]-L-lysine = [E2 ubiquitin-conjugating enzyme]-L-cysteine + N(6)-ubiquitinyl-[acceptor protein]-L-lysine.</text>
        <dbReference type="EC" id="2.3.2.27"/>
    </reaction>
</comment>
<comment type="pathway">
    <text evidence="2">Protein modification; protein ubiquitination.</text>
</comment>
<comment type="subunit">
    <text evidence="1 2 3">Homotetramer. Component of activated, catalytic and post-catalytic spliceosomes. Component of the Prp19 complex/PRP19C/Nineteen complex/NTC and related complexes described as PRP19-CDC5L splicing complex and PSO4 complex. A homotetramer of PRPF19, CDC5L, PLRG1 and BCAS2 constitute the core of those complexes. The interaction with CDC5L, PLRG1 and BCAS2 is direct within this core complex. At least three less stably associated proteins CTNNBL1, CWC15 and HSPA8 are found in the Prp19 complex. The Prp19 complex associates with the spliceosome during its assembly and remodeling recruiting additional proteins. Component of the XAB2 complex, a multimeric protein complex composed of XAB2, PRPF19, AQR, ZNF830, ISY1, and PPIE. Interacts with CWC22 and EIF4A3 in an RNA-independent manner. Interacts with RPA1 and RPA2; the PRP19-CDC5L complex is recruited to the sites of DNA repair where it interacts with the replication protein A complex (RPA). Interacts with SETMAR; required for SETMAR recruitment to site of DNA damage. Interacts with U2AF2; the interaction is direct and recruits the Prp19 complex to RNA polymerase II C-terminal domain (CTD) and the pre-mRNA. Interacts with PRPF3. Interacts with APEX1, DNTT and PSMB4. Interacts with KNSTRN (By similarity). Interacts with PSMC5 (By similarity). Interacts (via N-terminus) with CDC5L (PubMed:16352598). Interacts with KHDC4 (By similarity). Interacts with USB1 (By similarity). Interacts with DDX41 (By similarity).</text>
</comment>
<comment type="subcellular location">
    <subcellularLocation>
        <location evidence="3">Nucleus</location>
    </subcellularLocation>
    <subcellularLocation>
        <location evidence="2">Nucleus</location>
        <location evidence="2">Nucleoplasm</location>
    </subcellularLocation>
    <subcellularLocation>
        <location evidence="2">Cytoplasm</location>
        <location evidence="2">Cytoskeleton</location>
        <location evidence="2">Spindle</location>
    </subcellularLocation>
    <subcellularLocation>
        <location evidence="2">Cytoplasm</location>
    </subcellularLocation>
    <subcellularLocation>
        <location evidence="2">Lipid droplet</location>
    </subcellularLocation>
    <text evidence="2">Nucleoplasmic in interphase cells. Irregularly distributed in anaphase cells. In prophase cells, uniformly distributed, but not associated with condensing chromosomes. Found in extrachromosomal regions in metaphase cells. Mainly localized to the mitotic spindle apparatus when chromosomes segregate during anaphase. When nuclei reform during late telophase, uniformly distributed in daughter cells and displays no preferred association with decondensing chromatin. Recruited on damaged DNA at sites of double-strand break (By similarity).</text>
</comment>
<comment type="domain">
    <text evidence="2">The 7 WD repeats are necessary and sufficient to support interaction with the RPA complex.</text>
</comment>
<comment type="similarity">
    <text evidence="4">Belongs to the WD repeat PRP19 family.</text>
</comment>
<dbReference type="EC" id="2.3.2.27" evidence="2"/>
<dbReference type="EMBL" id="AB020022">
    <property type="protein sequence ID" value="BAA95215.2"/>
    <property type="molecule type" value="mRNA"/>
</dbReference>
<dbReference type="EMBL" id="BC107669">
    <property type="protein sequence ID" value="AAI07670.1"/>
    <property type="molecule type" value="mRNA"/>
</dbReference>
<dbReference type="RefSeq" id="NP_647549.2">
    <property type="nucleotide sequence ID" value="NM_139333.3"/>
</dbReference>
<dbReference type="SMR" id="Q9JMJ4"/>
<dbReference type="BioGRID" id="251533">
    <property type="interactions" value="5"/>
</dbReference>
<dbReference type="FunCoup" id="Q9JMJ4">
    <property type="interactions" value="3406"/>
</dbReference>
<dbReference type="IntAct" id="Q9JMJ4">
    <property type="interactions" value="4"/>
</dbReference>
<dbReference type="MINT" id="Q9JMJ4"/>
<dbReference type="STRING" id="10116.ENSRNOP00000028373"/>
<dbReference type="iPTMnet" id="Q9JMJ4"/>
<dbReference type="PhosphoSitePlus" id="Q9JMJ4"/>
<dbReference type="jPOST" id="Q9JMJ4"/>
<dbReference type="PaxDb" id="10116-ENSRNOP00000028373"/>
<dbReference type="PeptideAtlas" id="Q9JMJ4"/>
<dbReference type="GeneID" id="246216"/>
<dbReference type="KEGG" id="rno:246216"/>
<dbReference type="UCSC" id="RGD:708496">
    <property type="organism name" value="rat"/>
</dbReference>
<dbReference type="AGR" id="RGD:708496"/>
<dbReference type="CTD" id="27339"/>
<dbReference type="RGD" id="708496">
    <property type="gene designation" value="Prpf19"/>
</dbReference>
<dbReference type="VEuPathDB" id="HostDB:ENSRNOG00000020897"/>
<dbReference type="eggNOG" id="KOG0289">
    <property type="taxonomic scope" value="Eukaryota"/>
</dbReference>
<dbReference type="HOGENOM" id="CLU_023894_1_1_1"/>
<dbReference type="InParanoid" id="Q9JMJ4"/>
<dbReference type="PhylomeDB" id="Q9JMJ4"/>
<dbReference type="Reactome" id="R-RNO-6781823">
    <property type="pathway name" value="Formation of TC-NER Pre-Incision Complex"/>
</dbReference>
<dbReference type="Reactome" id="R-RNO-6782135">
    <property type="pathway name" value="Dual incision in TC-NER"/>
</dbReference>
<dbReference type="Reactome" id="R-RNO-6782210">
    <property type="pathway name" value="Gap-filling DNA repair synthesis and ligation in TC-NER"/>
</dbReference>
<dbReference type="Reactome" id="R-RNO-72163">
    <property type="pathway name" value="mRNA Splicing - Major Pathway"/>
</dbReference>
<dbReference type="UniPathway" id="UPA00143"/>
<dbReference type="PRO" id="PR:Q9JMJ4"/>
<dbReference type="Proteomes" id="UP000002494">
    <property type="component" value="Chromosome 1"/>
</dbReference>
<dbReference type="Bgee" id="ENSRNOG00000020897">
    <property type="expression patterns" value="Expressed in skeletal muscle tissue and 20 other cell types or tissues"/>
</dbReference>
<dbReference type="GO" id="GO:0071013">
    <property type="term" value="C:catalytic step 2 spliceosome"/>
    <property type="evidence" value="ECO:0000266"/>
    <property type="project" value="RGD"/>
</dbReference>
<dbReference type="GO" id="GO:0005737">
    <property type="term" value="C:cytoplasm"/>
    <property type="evidence" value="ECO:0000250"/>
    <property type="project" value="UniProtKB"/>
</dbReference>
<dbReference type="GO" id="GO:0005662">
    <property type="term" value="C:DNA replication factor A complex"/>
    <property type="evidence" value="ECO:0000266"/>
    <property type="project" value="RGD"/>
</dbReference>
<dbReference type="GO" id="GO:0005811">
    <property type="term" value="C:lipid droplet"/>
    <property type="evidence" value="ECO:0007669"/>
    <property type="project" value="UniProtKB-SubCell"/>
</dbReference>
<dbReference type="GO" id="GO:0016607">
    <property type="term" value="C:nuclear speck"/>
    <property type="evidence" value="ECO:0000250"/>
    <property type="project" value="UniProtKB"/>
</dbReference>
<dbReference type="GO" id="GO:0005634">
    <property type="term" value="C:nucleus"/>
    <property type="evidence" value="ECO:0000314"/>
    <property type="project" value="UniProtKB"/>
</dbReference>
<dbReference type="GO" id="GO:0000974">
    <property type="term" value="C:Prp19 complex"/>
    <property type="evidence" value="ECO:0000250"/>
    <property type="project" value="UniProtKB"/>
</dbReference>
<dbReference type="GO" id="GO:0035861">
    <property type="term" value="C:site of double-strand break"/>
    <property type="evidence" value="ECO:0000250"/>
    <property type="project" value="UniProtKB"/>
</dbReference>
<dbReference type="GO" id="GO:0005819">
    <property type="term" value="C:spindle"/>
    <property type="evidence" value="ECO:0007669"/>
    <property type="project" value="UniProtKB-SubCell"/>
</dbReference>
<dbReference type="GO" id="GO:0005681">
    <property type="term" value="C:spliceosomal complex"/>
    <property type="evidence" value="ECO:0000266"/>
    <property type="project" value="RGD"/>
</dbReference>
<dbReference type="GO" id="GO:0071006">
    <property type="term" value="C:U2-type catalytic step 1 spliceosome"/>
    <property type="evidence" value="ECO:0000318"/>
    <property type="project" value="GO_Central"/>
</dbReference>
<dbReference type="GO" id="GO:0071007">
    <property type="term" value="C:U2-type catalytic step 2 spliceosome"/>
    <property type="evidence" value="ECO:0000266"/>
    <property type="project" value="RGD"/>
</dbReference>
<dbReference type="GO" id="GO:0042802">
    <property type="term" value="F:identical protein binding"/>
    <property type="evidence" value="ECO:0000266"/>
    <property type="project" value="RGD"/>
</dbReference>
<dbReference type="GO" id="GO:0061630">
    <property type="term" value="F:ubiquitin protein ligase activity"/>
    <property type="evidence" value="ECO:0000250"/>
    <property type="project" value="UniProtKB"/>
</dbReference>
<dbReference type="GO" id="GO:0004842">
    <property type="term" value="F:ubiquitin-protein transferase activity"/>
    <property type="evidence" value="ECO:0000318"/>
    <property type="project" value="GO_Central"/>
</dbReference>
<dbReference type="GO" id="GO:0034450">
    <property type="term" value="F:ubiquitin-ubiquitin ligase activity"/>
    <property type="evidence" value="ECO:0000266"/>
    <property type="project" value="RGD"/>
</dbReference>
<dbReference type="GO" id="GO:0000077">
    <property type="term" value="P:DNA damage checkpoint signaling"/>
    <property type="evidence" value="ECO:0000250"/>
    <property type="project" value="UniProtKB"/>
</dbReference>
<dbReference type="GO" id="GO:0006303">
    <property type="term" value="P:double-strand break repair via nonhomologous end joining"/>
    <property type="evidence" value="ECO:0000250"/>
    <property type="project" value="UniProtKB"/>
</dbReference>
<dbReference type="GO" id="GO:0008610">
    <property type="term" value="P:lipid biosynthetic process"/>
    <property type="evidence" value="ECO:0000266"/>
    <property type="project" value="RGD"/>
</dbReference>
<dbReference type="GO" id="GO:0000398">
    <property type="term" value="P:mRNA splicing, via spliceosome"/>
    <property type="evidence" value="ECO:0000250"/>
    <property type="project" value="UniProtKB"/>
</dbReference>
<dbReference type="GO" id="GO:0048711">
    <property type="term" value="P:positive regulation of astrocyte differentiation"/>
    <property type="evidence" value="ECO:0000315"/>
    <property type="project" value="RGD"/>
</dbReference>
<dbReference type="GO" id="GO:0048026">
    <property type="term" value="P:positive regulation of mRNA splicing, via spliceosome"/>
    <property type="evidence" value="ECO:0000266"/>
    <property type="project" value="RGD"/>
</dbReference>
<dbReference type="GO" id="GO:0045666">
    <property type="term" value="P:positive regulation of neuron differentiation"/>
    <property type="evidence" value="ECO:0000314"/>
    <property type="project" value="MGI"/>
</dbReference>
<dbReference type="GO" id="GO:0010498">
    <property type="term" value="P:proteasomal protein catabolic process"/>
    <property type="evidence" value="ECO:0000250"/>
    <property type="project" value="UniProtKB"/>
</dbReference>
<dbReference type="GO" id="GO:0070534">
    <property type="term" value="P:protein K63-linked ubiquitination"/>
    <property type="evidence" value="ECO:0000250"/>
    <property type="project" value="UniProtKB"/>
</dbReference>
<dbReference type="GO" id="GO:0008104">
    <property type="term" value="P:protein localization"/>
    <property type="evidence" value="ECO:0000250"/>
    <property type="project" value="UniProtKB"/>
</dbReference>
<dbReference type="GO" id="GO:0000209">
    <property type="term" value="P:protein polyubiquitination"/>
    <property type="evidence" value="ECO:0000266"/>
    <property type="project" value="RGD"/>
</dbReference>
<dbReference type="GO" id="GO:0000245">
    <property type="term" value="P:spliceosomal complex assembly"/>
    <property type="evidence" value="ECO:0000266"/>
    <property type="project" value="RGD"/>
</dbReference>
<dbReference type="GO" id="GO:0000244">
    <property type="term" value="P:spliceosomal tri-snRNP complex assembly"/>
    <property type="evidence" value="ECO:0000250"/>
    <property type="project" value="UniProtKB"/>
</dbReference>
<dbReference type="CDD" id="cd16656">
    <property type="entry name" value="RING-Ubox_PRP19"/>
    <property type="match status" value="1"/>
</dbReference>
<dbReference type="CDD" id="cd00200">
    <property type="entry name" value="WD40"/>
    <property type="match status" value="1"/>
</dbReference>
<dbReference type="FunFam" id="2.130.10.10:FF:000043">
    <property type="entry name" value="pre-mRNA-processing factor 19"/>
    <property type="match status" value="1"/>
</dbReference>
<dbReference type="FunFam" id="3.30.40.10:FF:000027">
    <property type="entry name" value="Pre-mRNA-processing factor 19, putative"/>
    <property type="match status" value="1"/>
</dbReference>
<dbReference type="Gene3D" id="2.130.10.10">
    <property type="entry name" value="YVTN repeat-like/Quinoprotein amine dehydrogenase"/>
    <property type="match status" value="1"/>
</dbReference>
<dbReference type="Gene3D" id="3.30.40.10">
    <property type="entry name" value="Zinc/RING finger domain, C3HC4 (zinc finger)"/>
    <property type="match status" value="1"/>
</dbReference>
<dbReference type="InterPro" id="IPR020472">
    <property type="entry name" value="G-protein_beta_WD-40_rep"/>
</dbReference>
<dbReference type="InterPro" id="IPR013915">
    <property type="entry name" value="Pre-mRNA_splic_Prp19_cc"/>
</dbReference>
<dbReference type="InterPro" id="IPR038959">
    <property type="entry name" value="Prp19"/>
</dbReference>
<dbReference type="InterPro" id="IPR055340">
    <property type="entry name" value="RING-Ubox_PRP19"/>
</dbReference>
<dbReference type="InterPro" id="IPR003613">
    <property type="entry name" value="Ubox_domain"/>
</dbReference>
<dbReference type="InterPro" id="IPR015943">
    <property type="entry name" value="WD40/YVTN_repeat-like_dom_sf"/>
</dbReference>
<dbReference type="InterPro" id="IPR019775">
    <property type="entry name" value="WD40_repeat_CS"/>
</dbReference>
<dbReference type="InterPro" id="IPR036322">
    <property type="entry name" value="WD40_repeat_dom_sf"/>
</dbReference>
<dbReference type="InterPro" id="IPR001680">
    <property type="entry name" value="WD40_rpt"/>
</dbReference>
<dbReference type="InterPro" id="IPR013083">
    <property type="entry name" value="Znf_RING/FYVE/PHD"/>
</dbReference>
<dbReference type="PANTHER" id="PTHR43995">
    <property type="entry name" value="PRE-MRNA-PROCESSING FACTOR 19"/>
    <property type="match status" value="1"/>
</dbReference>
<dbReference type="PANTHER" id="PTHR43995:SF1">
    <property type="entry name" value="PRE-MRNA-PROCESSING FACTOR 19"/>
    <property type="match status" value="1"/>
</dbReference>
<dbReference type="Pfam" id="PF08606">
    <property type="entry name" value="Prp19"/>
    <property type="match status" value="1"/>
</dbReference>
<dbReference type="Pfam" id="PF04564">
    <property type="entry name" value="U-box"/>
    <property type="match status" value="1"/>
</dbReference>
<dbReference type="Pfam" id="PF24814">
    <property type="entry name" value="WD40_Prp19"/>
    <property type="match status" value="1"/>
</dbReference>
<dbReference type="PRINTS" id="PR00320">
    <property type="entry name" value="GPROTEINBRPT"/>
</dbReference>
<dbReference type="SMART" id="SM00504">
    <property type="entry name" value="Ubox"/>
    <property type="match status" value="1"/>
</dbReference>
<dbReference type="SMART" id="SM00320">
    <property type="entry name" value="WD40"/>
    <property type="match status" value="7"/>
</dbReference>
<dbReference type="SUPFAM" id="SSF57850">
    <property type="entry name" value="RING/U-box"/>
    <property type="match status" value="1"/>
</dbReference>
<dbReference type="SUPFAM" id="SSF50978">
    <property type="entry name" value="WD40 repeat-like"/>
    <property type="match status" value="1"/>
</dbReference>
<dbReference type="PROSITE" id="PS51698">
    <property type="entry name" value="U_BOX"/>
    <property type="match status" value="1"/>
</dbReference>
<dbReference type="PROSITE" id="PS00678">
    <property type="entry name" value="WD_REPEATS_1"/>
    <property type="match status" value="1"/>
</dbReference>
<dbReference type="PROSITE" id="PS50082">
    <property type="entry name" value="WD_REPEATS_2"/>
    <property type="match status" value="4"/>
</dbReference>
<dbReference type="PROSITE" id="PS50294">
    <property type="entry name" value="WD_REPEATS_REGION"/>
    <property type="match status" value="1"/>
</dbReference>
<organism>
    <name type="scientific">Rattus norvegicus</name>
    <name type="common">Rat</name>
    <dbReference type="NCBI Taxonomy" id="10116"/>
    <lineage>
        <taxon>Eukaryota</taxon>
        <taxon>Metazoa</taxon>
        <taxon>Chordata</taxon>
        <taxon>Craniata</taxon>
        <taxon>Vertebrata</taxon>
        <taxon>Euteleostomi</taxon>
        <taxon>Mammalia</taxon>
        <taxon>Eutheria</taxon>
        <taxon>Euarchontoglires</taxon>
        <taxon>Glires</taxon>
        <taxon>Rodentia</taxon>
        <taxon>Myomorpha</taxon>
        <taxon>Muroidea</taxon>
        <taxon>Muridae</taxon>
        <taxon>Murinae</taxon>
        <taxon>Rattus</taxon>
    </lineage>
</organism>
<proteinExistence type="evidence at protein level"/>
<feature type="initiator methionine" description="Removed" evidence="2">
    <location>
        <position position="1"/>
    </location>
</feature>
<feature type="chain" id="PRO_0000051147" description="Pre-mRNA-processing factor 19">
    <location>
        <begin position="2"/>
        <end position="504"/>
    </location>
</feature>
<feature type="domain" description="U-box">
    <location>
        <begin position="2"/>
        <end position="73"/>
    </location>
</feature>
<feature type="repeat" description="WD 1">
    <location>
        <begin position="219"/>
        <end position="259"/>
    </location>
</feature>
<feature type="repeat" description="WD 2">
    <location>
        <begin position="262"/>
        <end position="301"/>
    </location>
</feature>
<feature type="repeat" description="WD 3">
    <location>
        <begin position="304"/>
        <end position="345"/>
    </location>
</feature>
<feature type="repeat" description="WD 4">
    <location>
        <begin position="348"/>
        <end position="387"/>
    </location>
</feature>
<feature type="repeat" description="WD 5">
    <location>
        <begin position="390"/>
        <end position="429"/>
    </location>
</feature>
<feature type="repeat" description="WD 6">
    <location>
        <begin position="433"/>
        <end position="472"/>
    </location>
</feature>
<feature type="repeat" description="WD 7">
    <location>
        <begin position="473"/>
        <end position="503"/>
    </location>
</feature>
<feature type="region of interest" description="May mediate interaction with PSMC5" evidence="1">
    <location>
        <begin position="68"/>
        <end position="223"/>
    </location>
</feature>
<feature type="modified residue" description="N-acetylserine" evidence="2">
    <location>
        <position position="2"/>
    </location>
</feature>
<feature type="modified residue" description="N6-acetyllysine" evidence="2">
    <location>
        <position position="122"/>
    </location>
</feature>
<feature type="modified residue" description="N6-acetyllysine" evidence="1">
    <location>
        <position position="179"/>
    </location>
</feature>
<feature type="modified residue" description="N6-acetyllysine" evidence="1">
    <location>
        <position position="244"/>
    </location>
</feature>
<feature type="modified residue" description="N6-acetyllysine" evidence="2">
    <location>
        <position position="261"/>
    </location>
</feature>
<sequence length="504" mass="55239">MSLICSISNEVPEHPCVSPVSNHVYERRLIEKYIAENGTDPINNQPLSEEQLIDIKVAHPIRPKPPSATSIPAILKALQDEWDAVMLHSFTLRQQLQTTRQELSHALYQHDAACRVIARLTKEVTAAREALATLKPQAGLIVPQAVPSSQPSVVGAGEPMDLGELVGMTPEIIQKLQDKATVLTTERKKRGKTVPEELVKPEELSKYRQVASHVGLHSASIPGILALDLCPSDTNKILTGGADKNVVVFDKSTEQILATLKGHTKKVTSVVFHPSQELVFSASPDATIRIWSVPNTSCVQVVRAHESAVTGLSLHATGDYLLSSSDDQYWAFSDIQTGRVLTKVTDETSGCSLTCAQFHPDGLIFGTGTMDSQIKIWDLKERTNVANFPGHSGPITSIAFSENGYYLATAADDSSVKLWDLRKLKNFKTLQLDNNFEVKSLIFDQSGTYLALGGTDVQIYICKQWTEILHFTEHSGLTTGVAFGHHAKFIASTGMDRSLKFYSL</sequence>
<evidence type="ECO:0000250" key="1">
    <source>
        <dbReference type="UniProtKB" id="Q99KP6"/>
    </source>
</evidence>
<evidence type="ECO:0000250" key="2">
    <source>
        <dbReference type="UniProtKB" id="Q9UMS4"/>
    </source>
</evidence>
<evidence type="ECO:0000269" key="3">
    <source>
    </source>
</evidence>
<evidence type="ECO:0000305" key="4"/>
<evidence type="ECO:0000312" key="5">
    <source>
        <dbReference type="RGD" id="708496"/>
    </source>
</evidence>
<name>PRP19_RAT</name>
<accession>Q9JMJ4</accession>
<accession>Q3B7C6</accession>
<reference key="1">
    <citation type="journal article" date="2006" name="J. Biol. Chem.">
        <title>Involvement of the mouse Prp19 gene in neuronal/astroglial cell fate decisions.</title>
        <authorList>
            <person name="Urano Y."/>
            <person name="Iiduka M."/>
            <person name="Sugiyama A."/>
            <person name="Akiyama H."/>
            <person name="Uzawa K."/>
            <person name="Matsumoto G."/>
            <person name="Kawasaki Y."/>
            <person name="Tashiro F."/>
        </authorList>
    </citation>
    <scope>NUCLEOTIDE SEQUENCE [MRNA]</scope>
    <scope>FUNCTION</scope>
    <scope>INTERACTION WITH CDC5L</scope>
    <scope>SUBCELLULAR LOCATION</scope>
</reference>
<reference key="2">
    <citation type="journal article" date="2004" name="Genome Res.">
        <title>The status, quality, and expansion of the NIH full-length cDNA project: the Mammalian Gene Collection (MGC).</title>
        <authorList>
            <consortium name="The MGC Project Team"/>
        </authorList>
    </citation>
    <scope>NUCLEOTIDE SEQUENCE [LARGE SCALE MRNA]</scope>
    <source>
        <tissue>Prostate</tissue>
    </source>
</reference>